<feature type="chain" id="PRO_0000384731" description="Ribosome maturation factor RimP">
    <location>
        <begin position="1"/>
        <end position="187"/>
    </location>
</feature>
<comment type="function">
    <text evidence="1">Required for maturation of 30S ribosomal subunits.</text>
</comment>
<comment type="subcellular location">
    <subcellularLocation>
        <location evidence="1">Cytoplasm</location>
    </subcellularLocation>
</comment>
<comment type="similarity">
    <text evidence="1">Belongs to the RimP family.</text>
</comment>
<reference key="1">
    <citation type="journal article" date="2008" name="BMC Genomics">
        <title>Complete genome of Phenylobacterium zucineum - a novel facultative intracellular bacterium isolated from human erythroleukemia cell line K562.</title>
        <authorList>
            <person name="Luo Y."/>
            <person name="Xu X."/>
            <person name="Ding Z."/>
            <person name="Liu Z."/>
            <person name="Zhang B."/>
            <person name="Yan Z."/>
            <person name="Sun J."/>
            <person name="Hu S."/>
            <person name="Hu X."/>
        </authorList>
    </citation>
    <scope>NUCLEOTIDE SEQUENCE [LARGE SCALE GENOMIC DNA]</scope>
    <source>
        <strain>HLK1</strain>
    </source>
</reference>
<proteinExistence type="inferred from homology"/>
<organism>
    <name type="scientific">Phenylobacterium zucineum (strain HLK1)</name>
    <dbReference type="NCBI Taxonomy" id="450851"/>
    <lineage>
        <taxon>Bacteria</taxon>
        <taxon>Pseudomonadati</taxon>
        <taxon>Pseudomonadota</taxon>
        <taxon>Alphaproteobacteria</taxon>
        <taxon>Caulobacterales</taxon>
        <taxon>Caulobacteraceae</taxon>
        <taxon>Phenylobacterium</taxon>
    </lineage>
</organism>
<dbReference type="EMBL" id="CP000747">
    <property type="protein sequence ID" value="ACG79851.1"/>
    <property type="molecule type" value="Genomic_DNA"/>
</dbReference>
<dbReference type="RefSeq" id="WP_012523989.1">
    <property type="nucleotide sequence ID" value="NC_011144.1"/>
</dbReference>
<dbReference type="SMR" id="B4RC58"/>
<dbReference type="STRING" id="450851.PHZ_c3442"/>
<dbReference type="KEGG" id="pzu:PHZ_c3442"/>
<dbReference type="eggNOG" id="COG0779">
    <property type="taxonomic scope" value="Bacteria"/>
</dbReference>
<dbReference type="HOGENOM" id="CLU_070525_0_1_5"/>
<dbReference type="OrthoDB" id="9805006at2"/>
<dbReference type="Proteomes" id="UP000001868">
    <property type="component" value="Chromosome"/>
</dbReference>
<dbReference type="GO" id="GO:0005829">
    <property type="term" value="C:cytosol"/>
    <property type="evidence" value="ECO:0007669"/>
    <property type="project" value="TreeGrafter"/>
</dbReference>
<dbReference type="GO" id="GO:0000028">
    <property type="term" value="P:ribosomal small subunit assembly"/>
    <property type="evidence" value="ECO:0007669"/>
    <property type="project" value="TreeGrafter"/>
</dbReference>
<dbReference type="GO" id="GO:0006412">
    <property type="term" value="P:translation"/>
    <property type="evidence" value="ECO:0007669"/>
    <property type="project" value="TreeGrafter"/>
</dbReference>
<dbReference type="CDD" id="cd01734">
    <property type="entry name" value="YlxS_C"/>
    <property type="match status" value="1"/>
</dbReference>
<dbReference type="Gene3D" id="3.30.300.70">
    <property type="entry name" value="RimP-like superfamily, N-terminal"/>
    <property type="match status" value="1"/>
</dbReference>
<dbReference type="HAMAP" id="MF_01077">
    <property type="entry name" value="RimP"/>
    <property type="match status" value="1"/>
</dbReference>
<dbReference type="InterPro" id="IPR003728">
    <property type="entry name" value="Ribosome_maturation_RimP"/>
</dbReference>
<dbReference type="InterPro" id="IPR028998">
    <property type="entry name" value="RimP_C"/>
</dbReference>
<dbReference type="InterPro" id="IPR036847">
    <property type="entry name" value="RimP_C_sf"/>
</dbReference>
<dbReference type="InterPro" id="IPR028989">
    <property type="entry name" value="RimP_N"/>
</dbReference>
<dbReference type="InterPro" id="IPR035956">
    <property type="entry name" value="RimP_N_sf"/>
</dbReference>
<dbReference type="NCBIfam" id="NF000932">
    <property type="entry name" value="PRK00092.2-5"/>
    <property type="match status" value="1"/>
</dbReference>
<dbReference type="PANTHER" id="PTHR33867">
    <property type="entry name" value="RIBOSOME MATURATION FACTOR RIMP"/>
    <property type="match status" value="1"/>
</dbReference>
<dbReference type="PANTHER" id="PTHR33867:SF1">
    <property type="entry name" value="RIBOSOME MATURATION FACTOR RIMP"/>
    <property type="match status" value="1"/>
</dbReference>
<dbReference type="Pfam" id="PF17384">
    <property type="entry name" value="DUF150_C"/>
    <property type="match status" value="1"/>
</dbReference>
<dbReference type="Pfam" id="PF02576">
    <property type="entry name" value="RimP_N"/>
    <property type="match status" value="1"/>
</dbReference>
<dbReference type="SUPFAM" id="SSF74942">
    <property type="entry name" value="YhbC-like, C-terminal domain"/>
    <property type="match status" value="1"/>
</dbReference>
<dbReference type="SUPFAM" id="SSF75420">
    <property type="entry name" value="YhbC-like, N-terminal domain"/>
    <property type="match status" value="1"/>
</dbReference>
<accession>B4RC58</accession>
<name>RIMP_PHEZH</name>
<protein>
    <recommendedName>
        <fullName evidence="1">Ribosome maturation factor RimP</fullName>
    </recommendedName>
</protein>
<sequence length="187" mass="20780">MRGKTAEDLKLLDLLDPVAEAVGYEIVRLRLMGGERNQRRLQIMAERPLLEDGTGGDMNVEDCAKLSRAVSEVLDAADPISGEYTLEVSSPGVDRPLTRLKDFDTYEGYEARLELDRLAEGRKRFRGVLAGVEGDQVAIDLEGEEETALVPFAWIVEAKLVLTDELMKRGAQTRAARLESDEQQTSE</sequence>
<gene>
    <name evidence="1" type="primary">rimP</name>
    <name type="ordered locus">PHZ_c3442</name>
</gene>
<keyword id="KW-0963">Cytoplasm</keyword>
<keyword id="KW-1185">Reference proteome</keyword>
<keyword id="KW-0690">Ribosome biogenesis</keyword>
<evidence type="ECO:0000255" key="1">
    <source>
        <dbReference type="HAMAP-Rule" id="MF_01077"/>
    </source>
</evidence>